<proteinExistence type="evidence at protein level"/>
<gene>
    <name type="ORF">ARB_05654</name>
</gene>
<protein>
    <recommendedName>
        <fullName evidence="7">Probable beta-glucosidase ARB_05654</fullName>
        <ecNumber evidence="2">3.2.1.21</ecNumber>
    </recommendedName>
    <alternativeName>
        <fullName evidence="7">Allergen Asp n 14 homolog</fullName>
    </alternativeName>
    <alternativeName>
        <fullName evidence="2">Beta-D-glucoside glucohydrolase</fullName>
    </alternativeName>
</protein>
<organism>
    <name type="scientific">Arthroderma benhamiae (strain ATCC MYA-4681 / CBS 112371)</name>
    <name type="common">Trichophyton mentagrophytes</name>
    <dbReference type="NCBI Taxonomy" id="663331"/>
    <lineage>
        <taxon>Eukaryota</taxon>
        <taxon>Fungi</taxon>
        <taxon>Dikarya</taxon>
        <taxon>Ascomycota</taxon>
        <taxon>Pezizomycotina</taxon>
        <taxon>Eurotiomycetes</taxon>
        <taxon>Eurotiomycetidae</taxon>
        <taxon>Onygenales</taxon>
        <taxon>Arthrodermataceae</taxon>
        <taxon>Trichophyton</taxon>
    </lineage>
</organism>
<evidence type="ECO:0000250" key="1">
    <source>
        <dbReference type="UniProtKB" id="P29090"/>
    </source>
</evidence>
<evidence type="ECO:0000250" key="2">
    <source>
        <dbReference type="UniProtKB" id="P87076"/>
    </source>
</evidence>
<evidence type="ECO:0000255" key="3"/>
<evidence type="ECO:0000255" key="4">
    <source>
        <dbReference type="PROSITE-ProRule" id="PRU00498"/>
    </source>
</evidence>
<evidence type="ECO:0000269" key="5">
    <source>
    </source>
</evidence>
<evidence type="ECO:0000269" key="6">
    <source>
    </source>
</evidence>
<evidence type="ECO:0000305" key="7"/>
<evidence type="ECO:0000312" key="8">
    <source>
        <dbReference type="Proteomes" id="UP000008866"/>
    </source>
</evidence>
<accession>D4AN50</accession>
<feature type="signal peptide" evidence="3">
    <location>
        <begin position="1"/>
        <end position="18"/>
    </location>
</feature>
<feature type="chain" id="PRO_0000434931" description="Probable beta-glucosidase ARB_05654">
    <location>
        <begin position="19"/>
        <end position="820"/>
    </location>
</feature>
<feature type="active site" evidence="1">
    <location>
        <position position="304"/>
    </location>
</feature>
<feature type="glycosylation site" description="N-linked (GlcNAc...) asparagine" evidence="4">
    <location>
        <position position="62"/>
    </location>
</feature>
<feature type="glycosylation site" description="N-linked (GlcNAc...) asparagine" evidence="4">
    <location>
        <position position="276"/>
    </location>
</feature>
<feature type="glycosylation site" description="N-linked (GlcNAc...) asparagine" evidence="4">
    <location>
        <position position="339"/>
    </location>
</feature>
<feature type="glycosylation site" description="N-linked (GlcNAc...) asparagine" evidence="4">
    <location>
        <position position="346"/>
    </location>
</feature>
<feature type="glycosylation site" description="N-linked (GlcNAc...) asparagine" evidence="4">
    <location>
        <position position="465"/>
    </location>
</feature>
<feature type="glycosylation site" description="N-linked (GlcNAc...) asparagine" evidence="4">
    <location>
        <position position="547"/>
    </location>
</feature>
<feature type="glycosylation site" description="N-linked (GlcNAc...) asparagine" evidence="4">
    <location>
        <position position="566"/>
    </location>
</feature>
<feature type="glycosylation site" description="N-linked (GlcNAc...) asparagine" evidence="4">
    <location>
        <position position="588"/>
    </location>
</feature>
<feature type="glycosylation site" description="N-linked (GlcNAc...) asparagine" evidence="4">
    <location>
        <position position="811"/>
    </location>
</feature>
<sequence length="820" mass="88839">MLFRWCPLVALAIASGTAATEQSWESSPYYPSPWTKGEGEWEAAYQKAVSFVSQLTLDEKVNLTTGVGWMQESCVGQVGSIPRLGFRSLCMQDGPLGIRFGTEARMDIFLYLTCNTNFYLPYVGDYVTAFPAGINVAATWSRELAYLRGKAMGEEFRGKGADVILGPAIGPIGRAPEGGRNWEGLGPDPVLAGKLVAETIKGMQKSGVIACAKHFIANEQERFRIAAEAQGYGFDIAESISSNVDDVTMHEIYLWPFADAVKAGVGSIMCSYNQINNSYGCGNSYTQNKLLKGELGFRGFIMSDWQAHHSGVGSAFAGLDMSMPGDTLFGTGVSYWGANLTIAVANGTIPEWRVDDMAVRIMAAYYKVGRDQVQVPINFNSWTTDVEGYQHALVKEGYGVVNQRVNVRDHHAQIARRVARDSTVLLKNKGVLPLTGTEQFTAIIGEDAGPNINGPNSCPDRGCDNGTLAMGWGSGTTNFPYLVTPDDAIQREIVGKGVGNVMSVLQNGDFKNIQAVAGQADVALVFINSDSGEGYISVDGNEGDRKNLTTWKGGDEMVKQVTSVCNNTVLVIHSSGPILAGQWHDNPNITAILWAGLPGQESGNALVDILYGKENPGGKSPFTWGRAAEDYGTTILREPNNGKGAPQHLFSEGIMFEYRHFDQKNITPVYEFGYGLSYTTFSYSDLRVRPMRANKYVPATGMTKPAPRLGHSSTKYADYLFPGGFKGVTKYVYPWLTSTDPKEASGDKNYGMPLEDYVPPNANNGDAQPVLPASGVPGGNPGLFEDLYEVSAVITNDGDRVGEEVPQLVRNLSFFPPILS</sequence>
<comment type="function">
    <text evidence="2">Beta-glucosidases are one of a number of cellulolytic enzymes involved in the degradation of cellulosic biomass (By similarity). Catalyzes the last step releasing glucose from the inhibitory cellobiose (By similarity).</text>
</comment>
<comment type="catalytic activity">
    <reaction evidence="2">
        <text>Hydrolysis of terminal, non-reducing beta-D-glucosyl residues with release of beta-D-glucose.</text>
        <dbReference type="EC" id="3.2.1.21"/>
    </reaction>
</comment>
<comment type="pathway">
    <text evidence="2">Glycan metabolism; cellulose degradation.</text>
</comment>
<comment type="subcellular location">
    <subcellularLocation>
        <location evidence="5 6">Secreted</location>
    </subcellularLocation>
</comment>
<comment type="allergen">
    <text evidence="7">May cause an allergic reaction in human.</text>
</comment>
<comment type="similarity">
    <text evidence="7">Belongs to the glycosyl hydrolase 3 family.</text>
</comment>
<name>BGLA_ARTBC</name>
<keyword id="KW-0020">Allergen</keyword>
<keyword id="KW-0119">Carbohydrate metabolism</keyword>
<keyword id="KW-0325">Glycoprotein</keyword>
<keyword id="KW-0326">Glycosidase</keyword>
<keyword id="KW-0378">Hydrolase</keyword>
<keyword id="KW-0624">Polysaccharide degradation</keyword>
<keyword id="KW-1185">Reference proteome</keyword>
<keyword id="KW-0964">Secreted</keyword>
<keyword id="KW-0732">Signal</keyword>
<reference key="1">
    <citation type="journal article" date="2011" name="Genome Biol.">
        <title>Comparative and functional genomics provide insights into the pathogenicity of dermatophytic fungi.</title>
        <authorList>
            <person name="Burmester A."/>
            <person name="Shelest E."/>
            <person name="Gloeckner G."/>
            <person name="Heddergott C."/>
            <person name="Schindler S."/>
            <person name="Staib P."/>
            <person name="Heidel A."/>
            <person name="Felder M."/>
            <person name="Petzold A."/>
            <person name="Szafranski K."/>
            <person name="Feuermann M."/>
            <person name="Pedruzzi I."/>
            <person name="Priebe S."/>
            <person name="Groth M."/>
            <person name="Winkler R."/>
            <person name="Li W."/>
            <person name="Kniemeyer O."/>
            <person name="Schroeckh V."/>
            <person name="Hertweck C."/>
            <person name="Hube B."/>
            <person name="White T.C."/>
            <person name="Platzer M."/>
            <person name="Guthke R."/>
            <person name="Heitman J."/>
            <person name="Woestemeyer J."/>
            <person name="Zipfel P.F."/>
            <person name="Monod M."/>
            <person name="Brakhage A.A."/>
        </authorList>
    </citation>
    <scope>NUCLEOTIDE SEQUENCE [LARGE SCALE GENOMIC DNA]</scope>
    <scope>IDENTIFICATION BY MASS SPECTROMETRY</scope>
    <scope>SUBCELLULAR LOCATION</scope>
    <source>
        <strain evidence="8">ATCC MYA-4681 / CBS 112371</strain>
    </source>
</reference>
<reference key="2">
    <citation type="journal article" date="2011" name="Proteomics">
        <title>Identification of novel secreted proteases during extracellular proteolysis by dermatophytes at acidic pH.</title>
        <authorList>
            <person name="Sriranganadane D."/>
            <person name="Waridel P."/>
            <person name="Salamin K."/>
            <person name="Feuermann M."/>
            <person name="Mignon B."/>
            <person name="Staib P."/>
            <person name="Neuhaus J.M."/>
            <person name="Quadroni M."/>
            <person name="Monod M."/>
        </authorList>
    </citation>
    <scope>IDENTIFICATION BY MASS SPECTROMETRY</scope>
    <scope>SUBCELLULAR LOCATION</scope>
</reference>
<dbReference type="EC" id="3.2.1.21" evidence="2"/>
<dbReference type="EMBL" id="ABSU01000003">
    <property type="protein sequence ID" value="EFE35611.1"/>
    <property type="molecule type" value="Genomic_DNA"/>
</dbReference>
<dbReference type="RefSeq" id="XP_003016256.1">
    <property type="nucleotide sequence ID" value="XM_003016210.1"/>
</dbReference>
<dbReference type="SMR" id="D4AN50"/>
<dbReference type="STRING" id="663331.D4AN50"/>
<dbReference type="GeneID" id="9524327"/>
<dbReference type="KEGG" id="abe:ARB_05654"/>
<dbReference type="eggNOG" id="ENOG502QR4D">
    <property type="taxonomic scope" value="Eukaryota"/>
</dbReference>
<dbReference type="HOGENOM" id="CLU_004542_2_0_1"/>
<dbReference type="OMA" id="YYPSPWA"/>
<dbReference type="UniPathway" id="UPA00696"/>
<dbReference type="Proteomes" id="UP000008866">
    <property type="component" value="Unassembled WGS sequence"/>
</dbReference>
<dbReference type="GO" id="GO:0005576">
    <property type="term" value="C:extracellular region"/>
    <property type="evidence" value="ECO:0007669"/>
    <property type="project" value="UniProtKB-SubCell"/>
</dbReference>
<dbReference type="GO" id="GO:0008422">
    <property type="term" value="F:beta-glucosidase activity"/>
    <property type="evidence" value="ECO:0007669"/>
    <property type="project" value="UniProtKB-EC"/>
</dbReference>
<dbReference type="GO" id="GO:0030245">
    <property type="term" value="P:cellulose catabolic process"/>
    <property type="evidence" value="ECO:0007669"/>
    <property type="project" value="UniProtKB-UniPathway"/>
</dbReference>
<dbReference type="FunFam" id="3.20.20.300:FF:000002">
    <property type="entry name" value="Probable beta-glucosidase"/>
    <property type="match status" value="1"/>
</dbReference>
<dbReference type="FunFam" id="3.40.50.1700:FF:000003">
    <property type="entry name" value="Probable beta-glucosidase"/>
    <property type="match status" value="1"/>
</dbReference>
<dbReference type="Gene3D" id="3.40.50.1700">
    <property type="entry name" value="Glycoside hydrolase family 3 C-terminal domain"/>
    <property type="match status" value="1"/>
</dbReference>
<dbReference type="Gene3D" id="3.20.20.300">
    <property type="entry name" value="Glycoside hydrolase, family 3, N-terminal domain"/>
    <property type="match status" value="1"/>
</dbReference>
<dbReference type="InterPro" id="IPR050288">
    <property type="entry name" value="Cellulose_deg_GH3"/>
</dbReference>
<dbReference type="InterPro" id="IPR019800">
    <property type="entry name" value="Glyco_hydro_3_AS"/>
</dbReference>
<dbReference type="InterPro" id="IPR002772">
    <property type="entry name" value="Glyco_hydro_3_C"/>
</dbReference>
<dbReference type="InterPro" id="IPR036881">
    <property type="entry name" value="Glyco_hydro_3_C_sf"/>
</dbReference>
<dbReference type="InterPro" id="IPR001764">
    <property type="entry name" value="Glyco_hydro_3_N"/>
</dbReference>
<dbReference type="InterPro" id="IPR036962">
    <property type="entry name" value="Glyco_hydro_3_N_sf"/>
</dbReference>
<dbReference type="InterPro" id="IPR017853">
    <property type="entry name" value="Glycoside_hydrolase_SF"/>
</dbReference>
<dbReference type="PANTHER" id="PTHR42715">
    <property type="entry name" value="BETA-GLUCOSIDASE"/>
    <property type="match status" value="1"/>
</dbReference>
<dbReference type="PANTHER" id="PTHR42715:SF29">
    <property type="entry name" value="BETA-GLUCOSIDASE A-RELATED"/>
    <property type="match status" value="1"/>
</dbReference>
<dbReference type="Pfam" id="PF00933">
    <property type="entry name" value="Glyco_hydro_3"/>
    <property type="match status" value="1"/>
</dbReference>
<dbReference type="Pfam" id="PF01915">
    <property type="entry name" value="Glyco_hydro_3_C"/>
    <property type="match status" value="1"/>
</dbReference>
<dbReference type="PRINTS" id="PR00133">
    <property type="entry name" value="GLHYDRLASE3"/>
</dbReference>
<dbReference type="SUPFAM" id="SSF51445">
    <property type="entry name" value="(Trans)glycosidases"/>
    <property type="match status" value="1"/>
</dbReference>
<dbReference type="SUPFAM" id="SSF52279">
    <property type="entry name" value="Beta-D-glucan exohydrolase, C-terminal domain"/>
    <property type="match status" value="1"/>
</dbReference>
<dbReference type="PROSITE" id="PS00775">
    <property type="entry name" value="GLYCOSYL_HYDROL_F3"/>
    <property type="match status" value="1"/>
</dbReference>